<accession>Q39033</accession>
<accession>Q56XL3</accession>
<accession>Q8LG47</accession>
<reference key="1">
    <citation type="journal article" date="1997" name="Plant Mol. Biol.">
        <title>AtPLC2, a gene encoding phosphoinositide-specific phospholipase C, is constitutively expressed in vegetative and floral tissues in Arabidopsis thaliana.</title>
        <authorList>
            <person name="Hirayama T."/>
            <person name="Mitsukawa N."/>
            <person name="Shibata D."/>
            <person name="Shinozaki K."/>
        </authorList>
    </citation>
    <scope>NUCLEOTIDE SEQUENCE [MRNA]</scope>
    <scope>TISSUE SPECIFICITY</scope>
    <scope>LACK OF INDUCTION</scope>
</reference>
<reference key="2">
    <citation type="journal article" date="2000" name="Nature">
        <title>Sequence and analysis of chromosome 3 of the plant Arabidopsis thaliana.</title>
        <authorList>
            <person name="Salanoubat M."/>
            <person name="Lemcke K."/>
            <person name="Rieger M."/>
            <person name="Ansorge W."/>
            <person name="Unseld M."/>
            <person name="Fartmann B."/>
            <person name="Valle G."/>
            <person name="Bloecker H."/>
            <person name="Perez-Alonso M."/>
            <person name="Obermaier B."/>
            <person name="Delseny M."/>
            <person name="Boutry M."/>
            <person name="Grivell L.A."/>
            <person name="Mache R."/>
            <person name="Puigdomenech P."/>
            <person name="De Simone V."/>
            <person name="Choisne N."/>
            <person name="Artiguenave F."/>
            <person name="Robert C."/>
            <person name="Brottier P."/>
            <person name="Wincker P."/>
            <person name="Cattolico L."/>
            <person name="Weissenbach J."/>
            <person name="Saurin W."/>
            <person name="Quetier F."/>
            <person name="Schaefer M."/>
            <person name="Mueller-Auer S."/>
            <person name="Gabel C."/>
            <person name="Fuchs M."/>
            <person name="Benes V."/>
            <person name="Wurmbach E."/>
            <person name="Drzonek H."/>
            <person name="Erfle H."/>
            <person name="Jordan N."/>
            <person name="Bangert S."/>
            <person name="Wiedelmann R."/>
            <person name="Kranz H."/>
            <person name="Voss H."/>
            <person name="Holland R."/>
            <person name="Brandt P."/>
            <person name="Nyakatura G."/>
            <person name="Vezzi A."/>
            <person name="D'Angelo M."/>
            <person name="Pallavicini A."/>
            <person name="Toppo S."/>
            <person name="Simionati B."/>
            <person name="Conrad A."/>
            <person name="Hornischer K."/>
            <person name="Kauer G."/>
            <person name="Loehnert T.-H."/>
            <person name="Nordsiek G."/>
            <person name="Reichelt J."/>
            <person name="Scharfe M."/>
            <person name="Schoen O."/>
            <person name="Bargues M."/>
            <person name="Terol J."/>
            <person name="Climent J."/>
            <person name="Navarro P."/>
            <person name="Collado C."/>
            <person name="Perez-Perez A."/>
            <person name="Ottenwaelder B."/>
            <person name="Duchemin D."/>
            <person name="Cooke R."/>
            <person name="Laudie M."/>
            <person name="Berger-Llauro C."/>
            <person name="Purnelle B."/>
            <person name="Masuy D."/>
            <person name="de Haan M."/>
            <person name="Maarse A.C."/>
            <person name="Alcaraz J.-P."/>
            <person name="Cottet A."/>
            <person name="Casacuberta E."/>
            <person name="Monfort A."/>
            <person name="Argiriou A."/>
            <person name="Flores M."/>
            <person name="Liguori R."/>
            <person name="Vitale D."/>
            <person name="Mannhaupt G."/>
            <person name="Haase D."/>
            <person name="Schoof H."/>
            <person name="Rudd S."/>
            <person name="Zaccaria P."/>
            <person name="Mewes H.-W."/>
            <person name="Mayer K.F.X."/>
            <person name="Kaul S."/>
            <person name="Town C.D."/>
            <person name="Koo H.L."/>
            <person name="Tallon L.J."/>
            <person name="Jenkins J."/>
            <person name="Rooney T."/>
            <person name="Rizzo M."/>
            <person name="Walts A."/>
            <person name="Utterback T."/>
            <person name="Fujii C.Y."/>
            <person name="Shea T.P."/>
            <person name="Creasy T.H."/>
            <person name="Haas B."/>
            <person name="Maiti R."/>
            <person name="Wu D."/>
            <person name="Peterson J."/>
            <person name="Van Aken S."/>
            <person name="Pai G."/>
            <person name="Militscher J."/>
            <person name="Sellers P."/>
            <person name="Gill J.E."/>
            <person name="Feldblyum T.V."/>
            <person name="Preuss D."/>
            <person name="Lin X."/>
            <person name="Nierman W.C."/>
            <person name="Salzberg S.L."/>
            <person name="White O."/>
            <person name="Venter J.C."/>
            <person name="Fraser C.M."/>
            <person name="Kaneko T."/>
            <person name="Nakamura Y."/>
            <person name="Sato S."/>
            <person name="Kato T."/>
            <person name="Asamizu E."/>
            <person name="Sasamoto S."/>
            <person name="Kimura T."/>
            <person name="Idesawa K."/>
            <person name="Kawashima K."/>
            <person name="Kishida Y."/>
            <person name="Kiyokawa C."/>
            <person name="Kohara M."/>
            <person name="Matsumoto M."/>
            <person name="Matsuno A."/>
            <person name="Muraki A."/>
            <person name="Nakayama S."/>
            <person name="Nakazaki N."/>
            <person name="Shinpo S."/>
            <person name="Takeuchi C."/>
            <person name="Wada T."/>
            <person name="Watanabe A."/>
            <person name="Yamada M."/>
            <person name="Yasuda M."/>
            <person name="Tabata S."/>
        </authorList>
    </citation>
    <scope>NUCLEOTIDE SEQUENCE [LARGE SCALE GENOMIC DNA]</scope>
    <source>
        <strain>cv. Columbia</strain>
    </source>
</reference>
<reference key="3">
    <citation type="journal article" date="2017" name="Plant J.">
        <title>Araport11: a complete reannotation of the Arabidopsis thaliana reference genome.</title>
        <authorList>
            <person name="Cheng C.Y."/>
            <person name="Krishnakumar V."/>
            <person name="Chan A.P."/>
            <person name="Thibaud-Nissen F."/>
            <person name="Schobel S."/>
            <person name="Town C.D."/>
        </authorList>
    </citation>
    <scope>GENOME REANNOTATION</scope>
    <source>
        <strain>cv. Columbia</strain>
    </source>
</reference>
<reference key="4">
    <citation type="journal article" date="2003" name="Science">
        <title>Empirical analysis of transcriptional activity in the Arabidopsis genome.</title>
        <authorList>
            <person name="Yamada K."/>
            <person name="Lim J."/>
            <person name="Dale J.M."/>
            <person name="Chen H."/>
            <person name="Shinn P."/>
            <person name="Palm C.J."/>
            <person name="Southwick A.M."/>
            <person name="Wu H.C."/>
            <person name="Kim C.J."/>
            <person name="Nguyen M."/>
            <person name="Pham P.K."/>
            <person name="Cheuk R.F."/>
            <person name="Karlin-Newmann G."/>
            <person name="Liu S.X."/>
            <person name="Lam B."/>
            <person name="Sakano H."/>
            <person name="Wu T."/>
            <person name="Yu G."/>
            <person name="Miranda M."/>
            <person name="Quach H.L."/>
            <person name="Tripp M."/>
            <person name="Chang C.H."/>
            <person name="Lee J.M."/>
            <person name="Toriumi M.J."/>
            <person name="Chan M.M."/>
            <person name="Tang C.C."/>
            <person name="Onodera C.S."/>
            <person name="Deng J.M."/>
            <person name="Akiyama K."/>
            <person name="Ansari Y."/>
            <person name="Arakawa T."/>
            <person name="Banh J."/>
            <person name="Banno F."/>
            <person name="Bowser L."/>
            <person name="Brooks S.Y."/>
            <person name="Carninci P."/>
            <person name="Chao Q."/>
            <person name="Choy N."/>
            <person name="Enju A."/>
            <person name="Goldsmith A.D."/>
            <person name="Gurjal M."/>
            <person name="Hansen N.F."/>
            <person name="Hayashizaki Y."/>
            <person name="Johnson-Hopson C."/>
            <person name="Hsuan V.W."/>
            <person name="Iida K."/>
            <person name="Karnes M."/>
            <person name="Khan S."/>
            <person name="Koesema E."/>
            <person name="Ishida J."/>
            <person name="Jiang P.X."/>
            <person name="Jones T."/>
            <person name="Kawai J."/>
            <person name="Kamiya A."/>
            <person name="Meyers C."/>
            <person name="Nakajima M."/>
            <person name="Narusaka M."/>
            <person name="Seki M."/>
            <person name="Sakurai T."/>
            <person name="Satou M."/>
            <person name="Tamse R."/>
            <person name="Vaysberg M."/>
            <person name="Wallender E.K."/>
            <person name="Wong C."/>
            <person name="Yamamura Y."/>
            <person name="Yuan S."/>
            <person name="Shinozaki K."/>
            <person name="Davis R.W."/>
            <person name="Theologis A."/>
            <person name="Ecker J.R."/>
        </authorList>
    </citation>
    <scope>NUCLEOTIDE SEQUENCE [LARGE SCALE MRNA]</scope>
    <source>
        <strain>cv. Columbia</strain>
    </source>
</reference>
<reference key="5">
    <citation type="submission" date="2002-03" db="EMBL/GenBank/DDBJ databases">
        <title>Full-length cDNA from Arabidopsis thaliana.</title>
        <authorList>
            <person name="Brover V.V."/>
            <person name="Troukhan M.E."/>
            <person name="Alexandrov N.A."/>
            <person name="Lu Y.-P."/>
            <person name="Flavell R.B."/>
            <person name="Feldmann K.A."/>
        </authorList>
    </citation>
    <scope>NUCLEOTIDE SEQUENCE [LARGE SCALE MRNA] OF 309-581</scope>
</reference>
<reference key="6">
    <citation type="submission" date="2005-03" db="EMBL/GenBank/DDBJ databases">
        <title>Large-scale analysis of RIKEN Arabidopsis full-length (RAFL) cDNAs.</title>
        <authorList>
            <person name="Totoki Y."/>
            <person name="Seki M."/>
            <person name="Ishida J."/>
            <person name="Nakajima M."/>
            <person name="Enju A."/>
            <person name="Kamiya A."/>
            <person name="Narusaka M."/>
            <person name="Shin-i T."/>
            <person name="Nakagawa M."/>
            <person name="Sakamoto N."/>
            <person name="Oishi K."/>
            <person name="Kohara Y."/>
            <person name="Kobayashi M."/>
            <person name="Toyoda A."/>
            <person name="Sakaki Y."/>
            <person name="Sakurai T."/>
            <person name="Iida K."/>
            <person name="Akiyama K."/>
            <person name="Satou M."/>
            <person name="Toyoda T."/>
            <person name="Konagaya A."/>
            <person name="Carninci P."/>
            <person name="Kawai J."/>
            <person name="Hayashizaki Y."/>
            <person name="Shinozaki K."/>
        </authorList>
    </citation>
    <scope>NUCLEOTIDE SEQUENCE [LARGE SCALE MRNA] OF 319-581</scope>
    <source>
        <strain>cv. Columbia</strain>
    </source>
</reference>
<reference key="7">
    <citation type="journal article" date="2001" name="FEBS Lett.">
        <title>N-terminal EF-hand-like domain is required for phosphoinositide-specific phospholipase C activity in Arabidopsis thaliana.</title>
        <authorList>
            <person name="Otterhag L."/>
            <person name="Sommarin M."/>
            <person name="Pical C."/>
        </authorList>
    </citation>
    <scope>FUNCTION</scope>
    <scope>SUBCELLULAR LOCATION</scope>
</reference>
<reference key="8">
    <citation type="journal article" date="2002" name="Plant Physiol.">
        <title>Inositol phospholipid metabolism in Arabidopsis. Characterized and putative isoforms of inositol phospholipid kinase and phosphoinositide-specific phospholipase C.</title>
        <authorList>
            <person name="Mueller-Roeber B."/>
            <person name="Pical C."/>
        </authorList>
    </citation>
    <scope>GENE FAMILY</scope>
    <scope>NOMENCLATURE</scope>
</reference>
<reference key="9">
    <citation type="journal article" date="2003" name="Mol. Cell. Proteomics">
        <title>Large-scale analysis of in vivo phosphorylated membrane proteins by immobilized metal ion affinity chromatography and mass spectrometry.</title>
        <authorList>
            <person name="Nuehse T.S."/>
            <person name="Stensballe A."/>
            <person name="Jensen O.N."/>
            <person name="Peck S.C."/>
        </authorList>
    </citation>
    <scope>IDENTIFICATION BY MASS SPECTROMETRY [LARGE SCALE ANALYSIS]</scope>
    <source>
        <strain>cv. La-0</strain>
    </source>
</reference>
<reference key="10">
    <citation type="journal article" date="2004" name="New Phytol.">
        <title>Gene-specific expression and calcium activation of Arabidopsis thaliana phospholipase C isoforms.</title>
        <authorList>
            <person name="Hunt L."/>
            <person name="Otterhag L."/>
            <person name="Lee J.C."/>
            <person name="Lasheen T."/>
            <person name="Hunt J."/>
            <person name="Seki M."/>
            <person name="Shinozaki K."/>
            <person name="Sommarin M."/>
            <person name="Gilmour D.J."/>
            <person name="Pical C."/>
            <person name="Gray J.E."/>
        </authorList>
        <dbReference type="AGRICOLA" id="IND43668249"/>
    </citation>
    <scope>FUNCTION</scope>
    <scope>LACK OF INDUCTION</scope>
    <scope>TISSUE SPECIFICITY</scope>
</reference>
<comment type="function">
    <text evidence="5 7">The production of the second messenger molecules diacylglycerol (DAG) and inositol 1,4,5-trisphosphate (IP3) is mediated by activated phosphatidylinositol-specific phospholipase C enzymes. At physiological calcium concentration, the preferred substrate is phosphatidylinositol 4,5-bisphosphate versus phosphatidylinositol.</text>
</comment>
<comment type="catalytic activity">
    <reaction>
        <text>a 1,2-diacyl-sn-glycero-3-phospho-(1D-myo-inositol-4,5-bisphosphate) + H2O = 1D-myo-inositol 1,4,5-trisphosphate + a 1,2-diacyl-sn-glycerol + H(+)</text>
        <dbReference type="Rhea" id="RHEA:33179"/>
        <dbReference type="ChEBI" id="CHEBI:15377"/>
        <dbReference type="ChEBI" id="CHEBI:15378"/>
        <dbReference type="ChEBI" id="CHEBI:17815"/>
        <dbReference type="ChEBI" id="CHEBI:58456"/>
        <dbReference type="ChEBI" id="CHEBI:203600"/>
        <dbReference type="EC" id="3.1.4.11"/>
    </reaction>
</comment>
<comment type="cofactor">
    <cofactor>
        <name>Ca(2+)</name>
        <dbReference type="ChEBI" id="CHEBI:29108"/>
    </cofactor>
</comment>
<comment type="subcellular location">
    <subcellularLocation>
        <location evidence="5">Cell membrane</location>
        <topology evidence="5">Peripheral membrane protein</topology>
    </subcellularLocation>
</comment>
<comment type="alternative products">
    <event type="alternative splicing"/>
    <isoform>
        <id>Q39033-1</id>
        <name>1</name>
        <sequence type="displayed"/>
    </isoform>
    <text>A number of isoforms are produced. According to EST sequences.</text>
</comment>
<comment type="tissue specificity">
    <text evidence="6 7">Expressed in roots, shoots, leaves and flowers.</text>
</comment>
<comment type="induction">
    <text>Not induced by environmental stresses such as dehydration, salinity and low temperature.</text>
</comment>
<comment type="domain">
    <text>Amino acids 23-36 of the EF-hand-like domain are necessary catalysis but not for binding to lipid vesicles.</text>
</comment>
<comment type="PTM">
    <text>Phosphorylation level varies significantly during early response to bacterial elicitor.</text>
</comment>
<comment type="sequence caution" evidence="8">
    <conflict type="erroneous termination">
        <sequence resource="EMBL-CDS" id="AAM61037"/>
    </conflict>
    <text>Truncated C-terminus.</text>
</comment>
<evidence type="ECO:0000255" key="1">
    <source>
        <dbReference type="PROSITE-ProRule" id="PRU00041"/>
    </source>
</evidence>
<evidence type="ECO:0000255" key="2">
    <source>
        <dbReference type="PROSITE-ProRule" id="PRU00270"/>
    </source>
</evidence>
<evidence type="ECO:0000255" key="3">
    <source>
        <dbReference type="PROSITE-ProRule" id="PRU00271"/>
    </source>
</evidence>
<evidence type="ECO:0000256" key="4">
    <source>
        <dbReference type="SAM" id="MobiDB-lite"/>
    </source>
</evidence>
<evidence type="ECO:0000269" key="5">
    <source>
    </source>
</evidence>
<evidence type="ECO:0000269" key="6">
    <source>
    </source>
</evidence>
<evidence type="ECO:0000269" key="7">
    <source ref="10"/>
</evidence>
<evidence type="ECO:0000305" key="8"/>
<feature type="chain" id="PRO_0000324127" description="Phosphoinositide phospholipase C 2">
    <location>
        <begin position="1"/>
        <end position="581"/>
    </location>
</feature>
<feature type="domain" description="EF-hand-like">
    <location>
        <begin position="26"/>
        <end position="102"/>
    </location>
</feature>
<feature type="domain" description="PI-PLC X-box" evidence="2">
    <location>
        <begin position="103"/>
        <end position="248"/>
    </location>
</feature>
<feature type="domain" description="PI-PLC Y-box" evidence="3">
    <location>
        <begin position="317"/>
        <end position="433"/>
    </location>
</feature>
<feature type="domain" description="C2" evidence="1">
    <location>
        <begin position="434"/>
        <end position="563"/>
    </location>
</feature>
<feature type="region of interest" description="Disordered" evidence="4">
    <location>
        <begin position="279"/>
        <end position="314"/>
    </location>
</feature>
<feature type="compositionally biased region" description="Acidic residues" evidence="4">
    <location>
        <begin position="294"/>
        <end position="305"/>
    </location>
</feature>
<feature type="active site" evidence="2">
    <location>
        <position position="118"/>
    </location>
</feature>
<feature type="active site" evidence="2">
    <location>
        <position position="164"/>
    </location>
</feature>
<name>PLCD2_ARATH</name>
<organism>
    <name type="scientific">Arabidopsis thaliana</name>
    <name type="common">Mouse-ear cress</name>
    <dbReference type="NCBI Taxonomy" id="3702"/>
    <lineage>
        <taxon>Eukaryota</taxon>
        <taxon>Viridiplantae</taxon>
        <taxon>Streptophyta</taxon>
        <taxon>Embryophyta</taxon>
        <taxon>Tracheophyta</taxon>
        <taxon>Spermatophyta</taxon>
        <taxon>Magnoliopsida</taxon>
        <taxon>eudicotyledons</taxon>
        <taxon>Gunneridae</taxon>
        <taxon>Pentapetalae</taxon>
        <taxon>rosids</taxon>
        <taxon>malvids</taxon>
        <taxon>Brassicales</taxon>
        <taxon>Brassicaceae</taxon>
        <taxon>Camelineae</taxon>
        <taxon>Arabidopsis</taxon>
    </lineage>
</organism>
<protein>
    <recommendedName>
        <fullName>Phosphoinositide phospholipase C 2</fullName>
        <ecNumber>3.1.4.11</ecNumber>
    </recommendedName>
    <alternativeName>
        <fullName>Phosphoinositide phospholipase PLC2</fullName>
        <shortName>AtPLC2</shortName>
        <shortName>PI-PLC2</shortName>
    </alternativeName>
</protein>
<keyword id="KW-0025">Alternative splicing</keyword>
<keyword id="KW-1003">Cell membrane</keyword>
<keyword id="KW-0378">Hydrolase</keyword>
<keyword id="KW-0442">Lipid degradation</keyword>
<keyword id="KW-0443">Lipid metabolism</keyword>
<keyword id="KW-0472">Membrane</keyword>
<keyword id="KW-0597">Phosphoprotein</keyword>
<keyword id="KW-1185">Reference proteome</keyword>
<keyword id="KW-0807">Transducer</keyword>
<proteinExistence type="evidence at protein level"/>
<sequence length="581" mass="66122">MSKQTYKVCFCFRRRFRYTASEAPREIKTIFEKYSENGVMTVDHLHRFLIDVQKQDKATREDAQSIINSASSLLHRNGLHLDAFFKYLFGDNNPPLALHKVHHDMDAPISHYFIFTGHNSYLTGNQLSSDCSEVPIIDALKKGVRVIELDIWPNSNKDDIDVLHGMTLTTPVGLIKCLKAIRAHAFDVSDYPVVVTLEDHLTPDLQSKVAEMVTEIFGEILFTPPVGESLKEFPSPNSLKRRIIISTKPPKEYKEGKDVEVVQKGKDLGDEEVWGREVPSFIQRNKSEAKDDLDGNDDDDDDDDEDKSKINAPPQYKHLIAIHAGKPKGGITECLKVDPDKVRRLSLSEEQLEKAAEKYAKQIVRFTQHNLLRIYPKGTRVTSSNYNPLVGWSHGAQMVAFNMQGYGRSLWLMQGMFRANGGCGYIKKPDLLLKSGSDSDIFDPKATLPVKTTLRVTVYMGEGWYFDFRHTHFDQYSPPDFYTRVGIAGVPGDTVMKKTKTLEDNWIPAWDEVFEFPLTVPELALLRLEVHEYDMSEKDDFGGQTCLPVWELSEGIRAFPLHSRKGEKYKSVKLLVKVEFV</sequence>
<gene>
    <name type="primary">PLC2</name>
    <name type="ordered locus">At3g08510</name>
    <name type="ORF">T8G24.4</name>
</gene>
<dbReference type="EC" id="3.1.4.11"/>
<dbReference type="EMBL" id="D50804">
    <property type="protein sequence ID" value="BAA09432.1"/>
    <property type="molecule type" value="mRNA"/>
</dbReference>
<dbReference type="EMBL" id="AC074395">
    <property type="protein sequence ID" value="AAG50827.1"/>
    <property type="molecule type" value="Genomic_DNA"/>
</dbReference>
<dbReference type="EMBL" id="CP002686">
    <property type="protein sequence ID" value="AEE74640.1"/>
    <property type="molecule type" value="Genomic_DNA"/>
</dbReference>
<dbReference type="EMBL" id="CP002686">
    <property type="protein sequence ID" value="AEE74641.1"/>
    <property type="molecule type" value="Genomic_DNA"/>
</dbReference>
<dbReference type="EMBL" id="AF360206">
    <property type="protein sequence ID" value="AAK25916.1"/>
    <property type="molecule type" value="mRNA"/>
</dbReference>
<dbReference type="EMBL" id="AY040054">
    <property type="protein sequence ID" value="AAK64112.1"/>
    <property type="molecule type" value="mRNA"/>
</dbReference>
<dbReference type="EMBL" id="AY084465">
    <property type="protein sequence ID" value="AAM61037.1"/>
    <property type="status" value="ALT_SEQ"/>
    <property type="molecule type" value="mRNA"/>
</dbReference>
<dbReference type="EMBL" id="AK221660">
    <property type="protein sequence ID" value="BAD95335.1"/>
    <property type="molecule type" value="mRNA"/>
</dbReference>
<dbReference type="PIR" id="S71170">
    <property type="entry name" value="S71170"/>
</dbReference>
<dbReference type="RefSeq" id="NP_001030660.1">
    <molecule id="Q39033-1"/>
    <property type="nucleotide sequence ID" value="NM_001035583.1"/>
</dbReference>
<dbReference type="RefSeq" id="NP_187464.1">
    <molecule id="Q39033-1"/>
    <property type="nucleotide sequence ID" value="NM_111686.6"/>
</dbReference>
<dbReference type="SMR" id="Q39033"/>
<dbReference type="BioGRID" id="5334">
    <property type="interactions" value="34"/>
</dbReference>
<dbReference type="FunCoup" id="Q39033">
    <property type="interactions" value="1382"/>
</dbReference>
<dbReference type="IntAct" id="Q39033">
    <property type="interactions" value="11"/>
</dbReference>
<dbReference type="MINT" id="Q39033"/>
<dbReference type="STRING" id="3702.Q39033"/>
<dbReference type="iPTMnet" id="Q39033"/>
<dbReference type="SwissPalm" id="Q39033"/>
<dbReference type="PaxDb" id="3702-AT3G08510.1"/>
<dbReference type="ProteomicsDB" id="236632">
    <molecule id="Q39033-1"/>
</dbReference>
<dbReference type="EnsemblPlants" id="AT3G08510.1">
    <molecule id="Q39033-1"/>
    <property type="protein sequence ID" value="AT3G08510.1"/>
    <property type="gene ID" value="AT3G08510"/>
</dbReference>
<dbReference type="EnsemblPlants" id="AT3G08510.2">
    <molecule id="Q39033-1"/>
    <property type="protein sequence ID" value="AT3G08510.2"/>
    <property type="gene ID" value="AT3G08510"/>
</dbReference>
<dbReference type="GeneID" id="819999"/>
<dbReference type="Gramene" id="AT3G08510.1">
    <molecule id="Q39033-1"/>
    <property type="protein sequence ID" value="AT3G08510.1"/>
    <property type="gene ID" value="AT3G08510"/>
</dbReference>
<dbReference type="Gramene" id="AT3G08510.2">
    <molecule id="Q39033-1"/>
    <property type="protein sequence ID" value="AT3G08510.2"/>
    <property type="gene ID" value="AT3G08510"/>
</dbReference>
<dbReference type="KEGG" id="ath:AT3G08510"/>
<dbReference type="Araport" id="AT3G08510"/>
<dbReference type="TAIR" id="AT3G08510">
    <property type="gene designation" value="PLC2"/>
</dbReference>
<dbReference type="eggNOG" id="KOG0169">
    <property type="taxonomic scope" value="Eukaryota"/>
</dbReference>
<dbReference type="HOGENOM" id="CLU_002738_3_2_1"/>
<dbReference type="InParanoid" id="Q39033"/>
<dbReference type="OMA" id="INAEFEW"/>
<dbReference type="PhylomeDB" id="Q39033"/>
<dbReference type="BioCyc" id="ARA:MONOMERQT-8777"/>
<dbReference type="BioCyc" id="MetaCyc:MONOMER-1621"/>
<dbReference type="BRENDA" id="3.1.4.11">
    <property type="organism ID" value="399"/>
</dbReference>
<dbReference type="PRO" id="PR:Q39033"/>
<dbReference type="Proteomes" id="UP000006548">
    <property type="component" value="Chromosome 3"/>
</dbReference>
<dbReference type="ExpressionAtlas" id="Q39033">
    <property type="expression patterns" value="baseline and differential"/>
</dbReference>
<dbReference type="GO" id="GO:0005886">
    <property type="term" value="C:plasma membrane"/>
    <property type="evidence" value="ECO:0007005"/>
    <property type="project" value="TAIR"/>
</dbReference>
<dbReference type="GO" id="GO:0004435">
    <property type="term" value="F:phosphatidylinositol-4,5-bisphosphate phospholipase C activity"/>
    <property type="evidence" value="ECO:0007669"/>
    <property type="project" value="UniProtKB-EC"/>
</dbReference>
<dbReference type="GO" id="GO:0004629">
    <property type="term" value="F:phospholipase C activity"/>
    <property type="evidence" value="ECO:0000314"/>
    <property type="project" value="TAIR"/>
</dbReference>
<dbReference type="GO" id="GO:0042742">
    <property type="term" value="P:defense response to bacterium"/>
    <property type="evidence" value="ECO:0000315"/>
    <property type="project" value="TAIR"/>
</dbReference>
<dbReference type="GO" id="GO:0009553">
    <property type="term" value="P:embryo sac development"/>
    <property type="evidence" value="ECO:0000315"/>
    <property type="project" value="TAIR"/>
</dbReference>
<dbReference type="GO" id="GO:0048437">
    <property type="term" value="P:floral organ development"/>
    <property type="evidence" value="ECO:0000315"/>
    <property type="project" value="TAIR"/>
</dbReference>
<dbReference type="GO" id="GO:0035556">
    <property type="term" value="P:intracellular signal transduction"/>
    <property type="evidence" value="ECO:0007669"/>
    <property type="project" value="InterPro"/>
</dbReference>
<dbReference type="GO" id="GO:0016042">
    <property type="term" value="P:lipid catabolic process"/>
    <property type="evidence" value="ECO:0007669"/>
    <property type="project" value="UniProtKB-KW"/>
</dbReference>
<dbReference type="GO" id="GO:0009556">
    <property type="term" value="P:microsporogenesis"/>
    <property type="evidence" value="ECO:0000315"/>
    <property type="project" value="TAIR"/>
</dbReference>
<dbReference type="GO" id="GO:0010601">
    <property type="term" value="P:positive regulation of auxin biosynthetic process"/>
    <property type="evidence" value="ECO:0000315"/>
    <property type="project" value="TAIR"/>
</dbReference>
<dbReference type="CDD" id="cd00275">
    <property type="entry name" value="C2_PLC_like"/>
    <property type="match status" value="1"/>
</dbReference>
<dbReference type="FunFam" id="1.10.238.10:FF:000289">
    <property type="entry name" value="Phosphoinositide phospholipase C"/>
    <property type="match status" value="1"/>
</dbReference>
<dbReference type="FunFam" id="2.60.40.150:FF:000060">
    <property type="entry name" value="Phosphoinositide phospholipase C"/>
    <property type="match status" value="1"/>
</dbReference>
<dbReference type="Gene3D" id="2.60.40.150">
    <property type="entry name" value="C2 domain"/>
    <property type="match status" value="1"/>
</dbReference>
<dbReference type="Gene3D" id="1.10.238.10">
    <property type="entry name" value="EF-hand"/>
    <property type="match status" value="1"/>
</dbReference>
<dbReference type="Gene3D" id="3.20.20.190">
    <property type="entry name" value="Phosphatidylinositol (PI) phosphodiesterase"/>
    <property type="match status" value="1"/>
</dbReference>
<dbReference type="InterPro" id="IPR000008">
    <property type="entry name" value="C2_dom"/>
</dbReference>
<dbReference type="InterPro" id="IPR035892">
    <property type="entry name" value="C2_domain_sf"/>
</dbReference>
<dbReference type="InterPro" id="IPR011992">
    <property type="entry name" value="EF-hand-dom_pair"/>
</dbReference>
<dbReference type="InterPro" id="IPR001192">
    <property type="entry name" value="PI-PLC_fam"/>
</dbReference>
<dbReference type="InterPro" id="IPR017946">
    <property type="entry name" value="PLC-like_Pdiesterase_TIM-brl"/>
</dbReference>
<dbReference type="InterPro" id="IPR015359">
    <property type="entry name" value="PLC_EF-hand-like"/>
</dbReference>
<dbReference type="InterPro" id="IPR000909">
    <property type="entry name" value="PLipase_C_PInositol-sp_X_dom"/>
</dbReference>
<dbReference type="InterPro" id="IPR001711">
    <property type="entry name" value="PLipase_C_Pinositol-sp_Y"/>
</dbReference>
<dbReference type="PANTHER" id="PTHR10336:SF154">
    <property type="entry name" value="PHOSPHOINOSITIDE PHOSPHOLIPASE C 2"/>
    <property type="match status" value="1"/>
</dbReference>
<dbReference type="PANTHER" id="PTHR10336">
    <property type="entry name" value="PHOSPHOINOSITIDE-SPECIFIC PHOSPHOLIPASE C FAMILY PROTEIN"/>
    <property type="match status" value="1"/>
</dbReference>
<dbReference type="Pfam" id="PF00168">
    <property type="entry name" value="C2"/>
    <property type="match status" value="1"/>
</dbReference>
<dbReference type="Pfam" id="PF09279">
    <property type="entry name" value="EF-hand_like"/>
    <property type="match status" value="1"/>
</dbReference>
<dbReference type="Pfam" id="PF00388">
    <property type="entry name" value="PI-PLC-X"/>
    <property type="match status" value="1"/>
</dbReference>
<dbReference type="Pfam" id="PF00387">
    <property type="entry name" value="PI-PLC-Y"/>
    <property type="match status" value="1"/>
</dbReference>
<dbReference type="PRINTS" id="PR00390">
    <property type="entry name" value="PHPHLIPASEC"/>
</dbReference>
<dbReference type="SMART" id="SM00239">
    <property type="entry name" value="C2"/>
    <property type="match status" value="1"/>
</dbReference>
<dbReference type="SMART" id="SM00148">
    <property type="entry name" value="PLCXc"/>
    <property type="match status" value="1"/>
</dbReference>
<dbReference type="SMART" id="SM00149">
    <property type="entry name" value="PLCYc"/>
    <property type="match status" value="1"/>
</dbReference>
<dbReference type="SUPFAM" id="SSF49562">
    <property type="entry name" value="C2 domain (Calcium/lipid-binding domain, CaLB)"/>
    <property type="match status" value="1"/>
</dbReference>
<dbReference type="SUPFAM" id="SSF47473">
    <property type="entry name" value="EF-hand"/>
    <property type="match status" value="1"/>
</dbReference>
<dbReference type="SUPFAM" id="SSF51695">
    <property type="entry name" value="PLC-like phosphodiesterases"/>
    <property type="match status" value="1"/>
</dbReference>
<dbReference type="PROSITE" id="PS50004">
    <property type="entry name" value="C2"/>
    <property type="match status" value="1"/>
</dbReference>
<dbReference type="PROSITE" id="PS50007">
    <property type="entry name" value="PIPLC_X_DOMAIN"/>
    <property type="match status" value="1"/>
</dbReference>
<dbReference type="PROSITE" id="PS50008">
    <property type="entry name" value="PIPLC_Y_DOMAIN"/>
    <property type="match status" value="1"/>
</dbReference>